<proteinExistence type="inferred from homology"/>
<feature type="chain" id="PRO_0000350056" description="Dual-specificity RNA methyltransferase RlmN">
    <location>
        <begin position="1"/>
        <end position="382"/>
    </location>
</feature>
<feature type="domain" description="Radical SAM core" evidence="2">
    <location>
        <begin position="101"/>
        <end position="348"/>
    </location>
</feature>
<feature type="active site" description="Proton acceptor" evidence="1">
    <location>
        <position position="95"/>
    </location>
</feature>
<feature type="active site" description="S-methylcysteine intermediate" evidence="1">
    <location>
        <position position="353"/>
    </location>
</feature>
<feature type="binding site" evidence="1">
    <location>
        <position position="115"/>
    </location>
    <ligand>
        <name>[4Fe-4S] cluster</name>
        <dbReference type="ChEBI" id="CHEBI:49883"/>
        <note>4Fe-4S-S-AdoMet</note>
    </ligand>
</feature>
<feature type="binding site" evidence="1">
    <location>
        <position position="119"/>
    </location>
    <ligand>
        <name>[4Fe-4S] cluster</name>
        <dbReference type="ChEBI" id="CHEBI:49883"/>
        <note>4Fe-4S-S-AdoMet</note>
    </ligand>
</feature>
<feature type="binding site" evidence="1">
    <location>
        <position position="122"/>
    </location>
    <ligand>
        <name>[4Fe-4S] cluster</name>
        <dbReference type="ChEBI" id="CHEBI:49883"/>
        <note>4Fe-4S-S-AdoMet</note>
    </ligand>
</feature>
<feature type="binding site" evidence="1">
    <location>
        <begin position="179"/>
        <end position="180"/>
    </location>
    <ligand>
        <name>S-adenosyl-L-methionine</name>
        <dbReference type="ChEBI" id="CHEBI:59789"/>
    </ligand>
</feature>
<feature type="binding site" evidence="1">
    <location>
        <position position="211"/>
    </location>
    <ligand>
        <name>S-adenosyl-L-methionine</name>
        <dbReference type="ChEBI" id="CHEBI:59789"/>
    </ligand>
</feature>
<feature type="binding site" evidence="1">
    <location>
        <begin position="233"/>
        <end position="235"/>
    </location>
    <ligand>
        <name>S-adenosyl-L-methionine</name>
        <dbReference type="ChEBI" id="CHEBI:59789"/>
    </ligand>
</feature>
<feature type="binding site" evidence="1">
    <location>
        <position position="310"/>
    </location>
    <ligand>
        <name>S-adenosyl-L-methionine</name>
        <dbReference type="ChEBI" id="CHEBI:59789"/>
    </ligand>
</feature>
<feature type="disulfide bond" description="(transient)" evidence="1">
    <location>
        <begin position="108"/>
        <end position="353"/>
    </location>
</feature>
<accession>Q7W6P5</accession>
<keyword id="KW-0004">4Fe-4S</keyword>
<keyword id="KW-0963">Cytoplasm</keyword>
<keyword id="KW-1015">Disulfide bond</keyword>
<keyword id="KW-0408">Iron</keyword>
<keyword id="KW-0411">Iron-sulfur</keyword>
<keyword id="KW-0479">Metal-binding</keyword>
<keyword id="KW-0489">Methyltransferase</keyword>
<keyword id="KW-0698">rRNA processing</keyword>
<keyword id="KW-0949">S-adenosyl-L-methionine</keyword>
<keyword id="KW-0808">Transferase</keyword>
<keyword id="KW-0819">tRNA processing</keyword>
<organism>
    <name type="scientific">Bordetella parapertussis (strain 12822 / ATCC BAA-587 / NCTC 13253)</name>
    <dbReference type="NCBI Taxonomy" id="257311"/>
    <lineage>
        <taxon>Bacteria</taxon>
        <taxon>Pseudomonadati</taxon>
        <taxon>Pseudomonadota</taxon>
        <taxon>Betaproteobacteria</taxon>
        <taxon>Burkholderiales</taxon>
        <taxon>Alcaligenaceae</taxon>
        <taxon>Bordetella</taxon>
    </lineage>
</organism>
<gene>
    <name evidence="1" type="primary">rlmN</name>
    <name type="ordered locus">BPP2857</name>
</gene>
<comment type="function">
    <text evidence="1">Specifically methylates position 2 of adenine 2503 in 23S rRNA and position 2 of adenine 37 in tRNAs. m2A2503 modification seems to play a crucial role in the proofreading step occurring at the peptidyl transferase center and thus would serve to optimize ribosomal fidelity.</text>
</comment>
<comment type="catalytic activity">
    <reaction evidence="1">
        <text>adenosine(2503) in 23S rRNA + 2 reduced [2Fe-2S]-[ferredoxin] + 2 S-adenosyl-L-methionine = 2-methyladenosine(2503) in 23S rRNA + 5'-deoxyadenosine + L-methionine + 2 oxidized [2Fe-2S]-[ferredoxin] + S-adenosyl-L-homocysteine</text>
        <dbReference type="Rhea" id="RHEA:42916"/>
        <dbReference type="Rhea" id="RHEA-COMP:10000"/>
        <dbReference type="Rhea" id="RHEA-COMP:10001"/>
        <dbReference type="Rhea" id="RHEA-COMP:10152"/>
        <dbReference type="Rhea" id="RHEA-COMP:10282"/>
        <dbReference type="ChEBI" id="CHEBI:17319"/>
        <dbReference type="ChEBI" id="CHEBI:33737"/>
        <dbReference type="ChEBI" id="CHEBI:33738"/>
        <dbReference type="ChEBI" id="CHEBI:57844"/>
        <dbReference type="ChEBI" id="CHEBI:57856"/>
        <dbReference type="ChEBI" id="CHEBI:59789"/>
        <dbReference type="ChEBI" id="CHEBI:74411"/>
        <dbReference type="ChEBI" id="CHEBI:74497"/>
        <dbReference type="EC" id="2.1.1.192"/>
    </reaction>
</comment>
<comment type="catalytic activity">
    <reaction evidence="1">
        <text>adenosine(37) in tRNA + 2 reduced [2Fe-2S]-[ferredoxin] + 2 S-adenosyl-L-methionine = 2-methyladenosine(37) in tRNA + 5'-deoxyadenosine + L-methionine + 2 oxidized [2Fe-2S]-[ferredoxin] + S-adenosyl-L-homocysteine</text>
        <dbReference type="Rhea" id="RHEA:43332"/>
        <dbReference type="Rhea" id="RHEA-COMP:10000"/>
        <dbReference type="Rhea" id="RHEA-COMP:10001"/>
        <dbReference type="Rhea" id="RHEA-COMP:10162"/>
        <dbReference type="Rhea" id="RHEA-COMP:10485"/>
        <dbReference type="ChEBI" id="CHEBI:17319"/>
        <dbReference type="ChEBI" id="CHEBI:33737"/>
        <dbReference type="ChEBI" id="CHEBI:33738"/>
        <dbReference type="ChEBI" id="CHEBI:57844"/>
        <dbReference type="ChEBI" id="CHEBI:57856"/>
        <dbReference type="ChEBI" id="CHEBI:59789"/>
        <dbReference type="ChEBI" id="CHEBI:74411"/>
        <dbReference type="ChEBI" id="CHEBI:74497"/>
        <dbReference type="EC" id="2.1.1.192"/>
    </reaction>
</comment>
<comment type="cofactor">
    <cofactor evidence="1">
        <name>[4Fe-4S] cluster</name>
        <dbReference type="ChEBI" id="CHEBI:49883"/>
    </cofactor>
    <text evidence="1">Binds 1 [4Fe-4S] cluster. The cluster is coordinated with 3 cysteines and an exchangeable S-adenosyl-L-methionine.</text>
</comment>
<comment type="subcellular location">
    <subcellularLocation>
        <location evidence="1">Cytoplasm</location>
    </subcellularLocation>
</comment>
<comment type="miscellaneous">
    <text evidence="1">Reaction proceeds by a ping-pong mechanism involving intermediate methylation of a conserved cysteine residue.</text>
</comment>
<comment type="similarity">
    <text evidence="1">Belongs to the radical SAM superfamily. RlmN family.</text>
</comment>
<sequence length="382" mass="42396">MESVERVNLLGLDGAALSELVGQWGGKPFRARQLQRWVHQRGADSFDAMTDLARDFRAQLARDCVIEALPVNTEQRSSDGTRKWLFDVGQGNAIETVFIPEDDRGTLCISSQAGCVVNCRFCSTGHQGFNRNLRASEIIGQLWWAKRVLEAAADTARLPGGKAGEDTRVISNVVMMGMGEPLLNYDQVLPALRLMLDDNAYGLSRRRVTVSTSGVVPMMDRLSQDCPLALAVSLHAPNDALRDELVPLNRKYPLNALLAACERYLAHAPRDFITFEYCMLDGINDTDQHARELIQLARQVRCKLNLIPFNPFPASGLKRSPSARVRVFAQRLMDAGIVTTVRKTRGDDIDAACGQLAGEVRDRTRITERNATRTIPIQQVHA</sequence>
<name>RLMN_BORPA</name>
<protein>
    <recommendedName>
        <fullName evidence="1">Dual-specificity RNA methyltransferase RlmN</fullName>
        <ecNumber evidence="1">2.1.1.192</ecNumber>
    </recommendedName>
    <alternativeName>
        <fullName evidence="1">23S rRNA (adenine(2503)-C(2))-methyltransferase</fullName>
    </alternativeName>
    <alternativeName>
        <fullName evidence="1">23S rRNA m2A2503 methyltransferase</fullName>
    </alternativeName>
    <alternativeName>
        <fullName evidence="1">Ribosomal RNA large subunit methyltransferase N</fullName>
    </alternativeName>
    <alternativeName>
        <fullName evidence="1">tRNA (adenine(37)-C(2))-methyltransferase</fullName>
    </alternativeName>
    <alternativeName>
        <fullName evidence="1">tRNA m2A37 methyltransferase</fullName>
    </alternativeName>
</protein>
<reference key="1">
    <citation type="journal article" date="2003" name="Nat. Genet.">
        <title>Comparative analysis of the genome sequences of Bordetella pertussis, Bordetella parapertussis and Bordetella bronchiseptica.</title>
        <authorList>
            <person name="Parkhill J."/>
            <person name="Sebaihia M."/>
            <person name="Preston A."/>
            <person name="Murphy L.D."/>
            <person name="Thomson N.R."/>
            <person name="Harris D.E."/>
            <person name="Holden M.T.G."/>
            <person name="Churcher C.M."/>
            <person name="Bentley S.D."/>
            <person name="Mungall K.L."/>
            <person name="Cerdeno-Tarraga A.-M."/>
            <person name="Temple L."/>
            <person name="James K.D."/>
            <person name="Harris B."/>
            <person name="Quail M.A."/>
            <person name="Achtman M."/>
            <person name="Atkin R."/>
            <person name="Baker S."/>
            <person name="Basham D."/>
            <person name="Bason N."/>
            <person name="Cherevach I."/>
            <person name="Chillingworth T."/>
            <person name="Collins M."/>
            <person name="Cronin A."/>
            <person name="Davis P."/>
            <person name="Doggett J."/>
            <person name="Feltwell T."/>
            <person name="Goble A."/>
            <person name="Hamlin N."/>
            <person name="Hauser H."/>
            <person name="Holroyd S."/>
            <person name="Jagels K."/>
            <person name="Leather S."/>
            <person name="Moule S."/>
            <person name="Norberczak H."/>
            <person name="O'Neil S."/>
            <person name="Ormond D."/>
            <person name="Price C."/>
            <person name="Rabbinowitsch E."/>
            <person name="Rutter S."/>
            <person name="Sanders M."/>
            <person name="Saunders D."/>
            <person name="Seeger K."/>
            <person name="Sharp S."/>
            <person name="Simmonds M."/>
            <person name="Skelton J."/>
            <person name="Squares R."/>
            <person name="Squares S."/>
            <person name="Stevens K."/>
            <person name="Unwin L."/>
            <person name="Whitehead S."/>
            <person name="Barrell B.G."/>
            <person name="Maskell D.J."/>
        </authorList>
    </citation>
    <scope>NUCLEOTIDE SEQUENCE [LARGE SCALE GENOMIC DNA]</scope>
    <source>
        <strain>12822 / ATCC BAA-587 / NCTC 13253</strain>
    </source>
</reference>
<dbReference type="EC" id="2.1.1.192" evidence="1"/>
<dbReference type="EMBL" id="BX640431">
    <property type="protein sequence ID" value="CAE38149.1"/>
    <property type="molecule type" value="Genomic_DNA"/>
</dbReference>
<dbReference type="RefSeq" id="WP_010928770.1">
    <property type="nucleotide sequence ID" value="NC_002928.3"/>
</dbReference>
<dbReference type="SMR" id="Q7W6P5"/>
<dbReference type="GeneID" id="93204644"/>
<dbReference type="KEGG" id="bpa:BPP2857"/>
<dbReference type="HOGENOM" id="CLU_029101_0_0_4"/>
<dbReference type="Proteomes" id="UP000001421">
    <property type="component" value="Chromosome"/>
</dbReference>
<dbReference type="GO" id="GO:0005737">
    <property type="term" value="C:cytoplasm"/>
    <property type="evidence" value="ECO:0007669"/>
    <property type="project" value="UniProtKB-SubCell"/>
</dbReference>
<dbReference type="GO" id="GO:0051539">
    <property type="term" value="F:4 iron, 4 sulfur cluster binding"/>
    <property type="evidence" value="ECO:0007669"/>
    <property type="project" value="UniProtKB-UniRule"/>
</dbReference>
<dbReference type="GO" id="GO:0046872">
    <property type="term" value="F:metal ion binding"/>
    <property type="evidence" value="ECO:0007669"/>
    <property type="project" value="UniProtKB-KW"/>
</dbReference>
<dbReference type="GO" id="GO:0070040">
    <property type="term" value="F:rRNA (adenine(2503)-C2-)-methyltransferase activity"/>
    <property type="evidence" value="ECO:0007669"/>
    <property type="project" value="UniProtKB-UniRule"/>
</dbReference>
<dbReference type="GO" id="GO:0019843">
    <property type="term" value="F:rRNA binding"/>
    <property type="evidence" value="ECO:0007669"/>
    <property type="project" value="UniProtKB-UniRule"/>
</dbReference>
<dbReference type="GO" id="GO:0002935">
    <property type="term" value="F:tRNA (adenine(37)-C2)-methyltransferase activity"/>
    <property type="evidence" value="ECO:0007669"/>
    <property type="project" value="UniProtKB-UniRule"/>
</dbReference>
<dbReference type="GO" id="GO:0000049">
    <property type="term" value="F:tRNA binding"/>
    <property type="evidence" value="ECO:0007669"/>
    <property type="project" value="UniProtKB-UniRule"/>
</dbReference>
<dbReference type="GO" id="GO:0070475">
    <property type="term" value="P:rRNA base methylation"/>
    <property type="evidence" value="ECO:0007669"/>
    <property type="project" value="UniProtKB-UniRule"/>
</dbReference>
<dbReference type="GO" id="GO:0030488">
    <property type="term" value="P:tRNA methylation"/>
    <property type="evidence" value="ECO:0007669"/>
    <property type="project" value="UniProtKB-UniRule"/>
</dbReference>
<dbReference type="CDD" id="cd01335">
    <property type="entry name" value="Radical_SAM"/>
    <property type="match status" value="1"/>
</dbReference>
<dbReference type="FunFam" id="3.20.20.70:FF:000008">
    <property type="entry name" value="Dual-specificity RNA methyltransferase RlmN"/>
    <property type="match status" value="1"/>
</dbReference>
<dbReference type="Gene3D" id="1.10.150.530">
    <property type="match status" value="1"/>
</dbReference>
<dbReference type="Gene3D" id="3.20.20.70">
    <property type="entry name" value="Aldolase class I"/>
    <property type="match status" value="1"/>
</dbReference>
<dbReference type="HAMAP" id="MF_01849">
    <property type="entry name" value="RNA_methyltr_RlmN"/>
    <property type="match status" value="1"/>
</dbReference>
<dbReference type="InterPro" id="IPR013785">
    <property type="entry name" value="Aldolase_TIM"/>
</dbReference>
<dbReference type="InterPro" id="IPR040072">
    <property type="entry name" value="Methyltransferase_A"/>
</dbReference>
<dbReference type="InterPro" id="IPR048641">
    <property type="entry name" value="RlmN_N"/>
</dbReference>
<dbReference type="InterPro" id="IPR027492">
    <property type="entry name" value="RNA_MTrfase_RlmN"/>
</dbReference>
<dbReference type="InterPro" id="IPR004383">
    <property type="entry name" value="rRNA_lsu_MTrfase_RlmN/Cfr"/>
</dbReference>
<dbReference type="InterPro" id="IPR007197">
    <property type="entry name" value="rSAM"/>
</dbReference>
<dbReference type="NCBIfam" id="TIGR00048">
    <property type="entry name" value="rRNA_mod_RlmN"/>
    <property type="match status" value="1"/>
</dbReference>
<dbReference type="PANTHER" id="PTHR30544">
    <property type="entry name" value="23S RRNA METHYLTRANSFERASE"/>
    <property type="match status" value="1"/>
</dbReference>
<dbReference type="PANTHER" id="PTHR30544:SF5">
    <property type="entry name" value="RADICAL SAM CORE DOMAIN-CONTAINING PROTEIN"/>
    <property type="match status" value="1"/>
</dbReference>
<dbReference type="Pfam" id="PF04055">
    <property type="entry name" value="Radical_SAM"/>
    <property type="match status" value="1"/>
</dbReference>
<dbReference type="Pfam" id="PF21016">
    <property type="entry name" value="RlmN_N"/>
    <property type="match status" value="1"/>
</dbReference>
<dbReference type="PIRSF" id="PIRSF006004">
    <property type="entry name" value="CHP00048"/>
    <property type="match status" value="1"/>
</dbReference>
<dbReference type="SFLD" id="SFLDF00275">
    <property type="entry name" value="adenosine_C2_methyltransferase"/>
    <property type="match status" value="1"/>
</dbReference>
<dbReference type="SFLD" id="SFLDG01062">
    <property type="entry name" value="methyltransferase_(Class_A)"/>
    <property type="match status" value="1"/>
</dbReference>
<dbReference type="SUPFAM" id="SSF102114">
    <property type="entry name" value="Radical SAM enzymes"/>
    <property type="match status" value="1"/>
</dbReference>
<dbReference type="PROSITE" id="PS51918">
    <property type="entry name" value="RADICAL_SAM"/>
    <property type="match status" value="1"/>
</dbReference>
<evidence type="ECO:0000255" key="1">
    <source>
        <dbReference type="HAMAP-Rule" id="MF_01849"/>
    </source>
</evidence>
<evidence type="ECO:0000255" key="2">
    <source>
        <dbReference type="PROSITE-ProRule" id="PRU01266"/>
    </source>
</evidence>